<proteinExistence type="evidence at transcript level"/>
<organism>
    <name type="scientific">Oryza sativa subsp. japonica</name>
    <name type="common">Rice</name>
    <dbReference type="NCBI Taxonomy" id="39947"/>
    <lineage>
        <taxon>Eukaryota</taxon>
        <taxon>Viridiplantae</taxon>
        <taxon>Streptophyta</taxon>
        <taxon>Embryophyta</taxon>
        <taxon>Tracheophyta</taxon>
        <taxon>Spermatophyta</taxon>
        <taxon>Magnoliopsida</taxon>
        <taxon>Liliopsida</taxon>
        <taxon>Poales</taxon>
        <taxon>Poaceae</taxon>
        <taxon>BOP clade</taxon>
        <taxon>Oryzoideae</taxon>
        <taxon>Oryzeae</taxon>
        <taxon>Oryzinae</taxon>
        <taxon>Oryza</taxon>
        <taxon>Oryza sativa</taxon>
    </lineage>
</organism>
<name>DCL2B_ORYSJ</name>
<feature type="chain" id="PRO_0000378418" description="Endoribonuclease Dicer homolog 2b">
    <location>
        <begin position="1"/>
        <end position="1377"/>
    </location>
</feature>
<feature type="domain" description="Helicase ATP-binding" evidence="5">
    <location>
        <begin position="41"/>
        <end position="222"/>
    </location>
</feature>
<feature type="domain" description="Helicase C-terminal" evidence="6">
    <location>
        <begin position="388"/>
        <end position="561"/>
    </location>
</feature>
<feature type="domain" description="Dicer dsRNA-binding fold" evidence="7">
    <location>
        <begin position="534"/>
        <end position="626"/>
    </location>
</feature>
<feature type="domain" description="PAZ" evidence="2">
    <location>
        <begin position="798"/>
        <end position="913"/>
    </location>
</feature>
<feature type="domain" description="RNase III 1" evidence="3">
    <location>
        <begin position="940"/>
        <end position="1095"/>
    </location>
</feature>
<feature type="domain" description="RNase III 2" evidence="3">
    <location>
        <begin position="1132"/>
        <end position="1276"/>
    </location>
</feature>
<feature type="domain" description="DRBM" evidence="4">
    <location>
        <begin position="1302"/>
        <end position="1367"/>
    </location>
</feature>
<feature type="region of interest" description="Disordered" evidence="8">
    <location>
        <begin position="1"/>
        <end position="30"/>
    </location>
</feature>
<feature type="short sequence motif" description="DECH box" evidence="1">
    <location>
        <begin position="163"/>
        <end position="166"/>
    </location>
</feature>
<feature type="compositionally biased region" description="Gly residues" evidence="8">
    <location>
        <begin position="1"/>
        <end position="15"/>
    </location>
</feature>
<feature type="binding site" evidence="5">
    <location>
        <begin position="54"/>
        <end position="61"/>
    </location>
    <ligand>
        <name>ATP</name>
        <dbReference type="ChEBI" id="CHEBI:30616"/>
    </ligand>
</feature>
<feature type="binding site" evidence="1">
    <location>
        <position position="1171"/>
    </location>
    <ligand>
        <name>Mg(2+)</name>
        <dbReference type="ChEBI" id="CHEBI:18420"/>
    </ligand>
</feature>
<feature type="binding site" evidence="1">
    <location>
        <position position="1262"/>
    </location>
    <ligand>
        <name>Mg(2+)</name>
        <dbReference type="ChEBI" id="CHEBI:18420"/>
    </ligand>
</feature>
<feature type="binding site" evidence="1">
    <location>
        <position position="1265"/>
    </location>
    <ligand>
        <name>Mg(2+)</name>
        <dbReference type="ChEBI" id="CHEBI:18420"/>
    </ligand>
</feature>
<feature type="site" description="Important for activity" evidence="1">
    <location>
        <position position="1258"/>
    </location>
</feature>
<accession>Q69LX2</accession>
<accession>Q0J2Q7</accession>
<comment type="function">
    <text evidence="1">Probably involved in the RNA silencing pathway. May cleave double-stranded RNA to produce short 21-24 nucleotides (nt) RNAs which target the selective destruction of complementary RNAs (By similarity).</text>
</comment>
<comment type="cofactor">
    <cofactor evidence="1">
        <name>Mg(2+)</name>
        <dbReference type="ChEBI" id="CHEBI:18420"/>
    </cofactor>
    <cofactor evidence="1">
        <name>Mn(2+)</name>
        <dbReference type="ChEBI" id="CHEBI:29035"/>
    </cofactor>
</comment>
<comment type="subunit">
    <text evidence="1">May interact with ARGONAUTE1 or PINHEAD through their common PAZ domains.</text>
</comment>
<comment type="subcellular location">
    <subcellularLocation>
        <location evidence="9">Nucleus</location>
    </subcellularLocation>
</comment>
<comment type="similarity">
    <text evidence="7">Belongs to the helicase family. Dicer subfamily.</text>
</comment>
<comment type="sequence caution" evidence="9">
    <conflict type="erroneous gene model prediction">
        <sequence resource="EMBL-CDS" id="BAD34005"/>
    </conflict>
</comment>
<comment type="sequence caution" evidence="9">
    <conflict type="erroneous gene model prediction">
        <sequence resource="EMBL-CDS" id="BAD36404"/>
    </conflict>
</comment>
<comment type="sequence caution" evidence="9">
    <conflict type="erroneous gene model prediction">
        <sequence resource="EMBL-CDS" id="BAF24758"/>
    </conflict>
</comment>
<evidence type="ECO:0000250" key="1"/>
<evidence type="ECO:0000255" key="2">
    <source>
        <dbReference type="PROSITE-ProRule" id="PRU00142"/>
    </source>
</evidence>
<evidence type="ECO:0000255" key="3">
    <source>
        <dbReference type="PROSITE-ProRule" id="PRU00177"/>
    </source>
</evidence>
<evidence type="ECO:0000255" key="4">
    <source>
        <dbReference type="PROSITE-ProRule" id="PRU00266"/>
    </source>
</evidence>
<evidence type="ECO:0000255" key="5">
    <source>
        <dbReference type="PROSITE-ProRule" id="PRU00541"/>
    </source>
</evidence>
<evidence type="ECO:0000255" key="6">
    <source>
        <dbReference type="PROSITE-ProRule" id="PRU00542"/>
    </source>
</evidence>
<evidence type="ECO:0000255" key="7">
    <source>
        <dbReference type="PROSITE-ProRule" id="PRU00657"/>
    </source>
</evidence>
<evidence type="ECO:0000256" key="8">
    <source>
        <dbReference type="SAM" id="MobiDB-lite"/>
    </source>
</evidence>
<evidence type="ECO:0000305" key="9"/>
<protein>
    <recommendedName>
        <fullName>Endoribonuclease Dicer homolog 2b</fullName>
    </recommendedName>
    <alternativeName>
        <fullName>Dicer-like protein 2b</fullName>
        <shortName>OsDCL2b</shortName>
        <ecNumber>3.1.26.-</ecNumber>
    </alternativeName>
</protein>
<gene>
    <name type="primary">DCL2B</name>
    <name type="ordered locus">Os09g0315100</name>
    <name type="ordered locus">LOC_Os09g14610</name>
    <name type="ORF">OSJNBa0057D11.8-1</name>
    <name type="ORF">OSJNBb0079G12.35-1</name>
</gene>
<sequence length="1377" mass="154800">MGGPLTAAGGRGDGGAKAVEPLRPPPPPDPKTMARWYQLEALERAVRGNTLAFLETGSGKTLIAVMLLRAYAHRVRRPDSRRFAVFLVPTVVLVGQQARVVEQHTDLVVKQFCGEMGVDFWDAATWRSQLEDGEVLVMTPQILLDNLRHSFFRLQDIALLIFDECHHARGNTPYACIFKEFYHPQLNSSASDPLPRIFGMSASLIYSKDLNQHNYSKQISEIENLMNSKVYTVDSESALSEYIPFASTKIVHFDDSNISSELHANILSCLNRLTKKHIEALDRKLHGSSLENAKQRISKLHRTFVYCLYNLGVWLAAKAAEVQSYEENSLSFWGETLDKNVEGFIRNYSEEVHRELSCFLKNGHIGEKFPADSQDGILTPKVHCLIRTLLQYRHMQDLRCIVFVQRVITSIVLEPLLSSIHQMSGWNVKHMAGSRPGLLSQSRKNHTEIVESFRKGKVHIIIATQILEEGLDVPSCNLVIRFDPSATVCSFIQSRGRARMENSDYLLLVGRGDVEAHTNAKKFLASGQIMREESLRLGSISCQPLENTLCEDTYYRVESTPAFDIDKASGTCTLHLPKSSPVQTVNVEGEGSILKETVCLKACQELHAIGALTDSLLPELDVPCDEEPDIVVENKIEQPSYFPEEFVDNWRSFSRLGIYYCYKISLEGCPKTASPTDILLALKCDLGSDFTSSSFKLPGGQDNASVTMKYVGIIHLNQEQVIIARRFQTTILSFLIGDDHLEVSNGIKYFHEMQVPIGVVYLLLPLVSGRIDWCSMKFSSSPIYEANNKHMTHCHSCRDIDLLQTKDGPFCRCILKNSIVCTPHNNIFYVISGFLDLDANSRLPQHDGTVVTYKDYFKTRHGLTLTFENQPLLAGSKHVKVRNFLHNYYYKKEKEPGDRYSVELPPELCRIIMSPVSANNLHIFSYVPSIMFRIQCMLLSVKLKVQLGPTVQQFDVPVLKILEALTTKKCQEEFSQESLETLGDSFLKYVTTRHLFSEYRLQHEGILTKMKKNLISNAALCQLACSSNLVGYIHAEEFNPRDWIIPCLDYDERGNKKISFLAPNGMYSQRKMSIKSKRIADSVEALIGAYLSTAGEKAAFLLMKSLGMNIEFHTEIPVERKISMKAEEFIDVRSLEGMLGYKFNDSLLLLEALTHGSYQTSGPTSCYQRLEFLGDAILDHLFTEYYYSKYPDCTPELLTDLRSASVNNNCYAHAAVKSGLNKHILHSSSELHRKMSYYLGQSFTGPSYGWEAGIGLPKVLGDVIESIAGAIYLDSKCDKEVVWRSMKRLLEPLATPETIEPDPVKGLQEFCDRRSFKITYEKNHVDGVSSVIARVKAGETTYSATKSGPCKLAKKLASKAVLKDLIAGHKDTEAAAV</sequence>
<reference key="1">
    <citation type="journal article" date="2005" name="Nature">
        <title>The map-based sequence of the rice genome.</title>
        <authorList>
            <consortium name="International rice genome sequencing project (IRGSP)"/>
        </authorList>
    </citation>
    <scope>NUCLEOTIDE SEQUENCE [LARGE SCALE GENOMIC DNA]</scope>
    <source>
        <strain>cv. Nipponbare</strain>
    </source>
</reference>
<reference key="2">
    <citation type="journal article" date="2008" name="Nucleic Acids Res.">
        <title>The rice annotation project database (RAP-DB): 2008 update.</title>
        <authorList>
            <consortium name="The rice annotation project (RAP)"/>
        </authorList>
    </citation>
    <scope>GENOME REANNOTATION</scope>
    <source>
        <strain>cv. Nipponbare</strain>
    </source>
</reference>
<reference key="3">
    <citation type="journal article" date="2013" name="Rice">
        <title>Improvement of the Oryza sativa Nipponbare reference genome using next generation sequence and optical map data.</title>
        <authorList>
            <person name="Kawahara Y."/>
            <person name="de la Bastide M."/>
            <person name="Hamilton J.P."/>
            <person name="Kanamori H."/>
            <person name="McCombie W.R."/>
            <person name="Ouyang S."/>
            <person name="Schwartz D.C."/>
            <person name="Tanaka T."/>
            <person name="Wu J."/>
            <person name="Zhou S."/>
            <person name="Childs K.L."/>
            <person name="Davidson R.M."/>
            <person name="Lin H."/>
            <person name="Quesada-Ocampo L."/>
            <person name="Vaillancourt B."/>
            <person name="Sakai H."/>
            <person name="Lee S.S."/>
            <person name="Kim J."/>
            <person name="Numa H."/>
            <person name="Itoh T."/>
            <person name="Buell C.R."/>
            <person name="Matsumoto T."/>
        </authorList>
    </citation>
    <scope>GENOME REANNOTATION</scope>
    <source>
        <strain>cv. Nipponbare</strain>
    </source>
</reference>
<reference key="4">
    <citation type="journal article" date="2008" name="BMC Genomics">
        <title>Genome-wide identification, organization and phylogenetic analysis of dicer-like, argonaute and RNA-dependent RNA polymerase gene families and their expression analysis during reproductive development and stress in rice.</title>
        <authorList>
            <person name="Kapoor M."/>
            <person name="Arora R."/>
            <person name="Lama T."/>
            <person name="Nijhawan A."/>
            <person name="Khurana J.P."/>
            <person name="Tyagi A.K."/>
            <person name="Kapoor S."/>
        </authorList>
    </citation>
    <scope>GENE FAMILY</scope>
    <scope>NOMENCLATURE</scope>
</reference>
<dbReference type="EC" id="3.1.26.-"/>
<dbReference type="EMBL" id="AP005782">
    <property type="protein sequence ID" value="BAD34005.1"/>
    <property type="status" value="ALT_SEQ"/>
    <property type="molecule type" value="Genomic_DNA"/>
</dbReference>
<dbReference type="EMBL" id="AP005802">
    <property type="protein sequence ID" value="BAD36404.1"/>
    <property type="status" value="ALT_SEQ"/>
    <property type="molecule type" value="Genomic_DNA"/>
</dbReference>
<dbReference type="EMBL" id="AP008215">
    <property type="protein sequence ID" value="BAF24758.1"/>
    <property type="status" value="ALT_SEQ"/>
    <property type="molecule type" value="Genomic_DNA"/>
</dbReference>
<dbReference type="EMBL" id="AP014965">
    <property type="status" value="NOT_ANNOTATED_CDS"/>
    <property type="molecule type" value="Genomic_DNA"/>
</dbReference>
<dbReference type="RefSeq" id="XP_015611517.1">
    <property type="nucleotide sequence ID" value="XM_015756031.1"/>
</dbReference>
<dbReference type="SMR" id="Q69LX2"/>
<dbReference type="FunCoup" id="Q69LX2">
    <property type="interactions" value="1894"/>
</dbReference>
<dbReference type="STRING" id="39947.Q69LX2"/>
<dbReference type="PaxDb" id="39947-Q69LX2"/>
<dbReference type="KEGG" id="dosa:Os09g0315100"/>
<dbReference type="InParanoid" id="Q69LX2"/>
<dbReference type="OrthoDB" id="6513042at2759"/>
<dbReference type="Proteomes" id="UP000000763">
    <property type="component" value="Chromosome 9"/>
</dbReference>
<dbReference type="Proteomes" id="UP000059680">
    <property type="component" value="Chromosome 9"/>
</dbReference>
<dbReference type="GO" id="GO:0005737">
    <property type="term" value="C:cytoplasm"/>
    <property type="evidence" value="ECO:0000318"/>
    <property type="project" value="GO_Central"/>
</dbReference>
<dbReference type="GO" id="GO:0005634">
    <property type="term" value="C:nucleus"/>
    <property type="evidence" value="ECO:0000318"/>
    <property type="project" value="GO_Central"/>
</dbReference>
<dbReference type="GO" id="GO:0005524">
    <property type="term" value="F:ATP binding"/>
    <property type="evidence" value="ECO:0007669"/>
    <property type="project" value="UniProtKB-KW"/>
</dbReference>
<dbReference type="GO" id="GO:0004386">
    <property type="term" value="F:helicase activity"/>
    <property type="evidence" value="ECO:0007669"/>
    <property type="project" value="UniProtKB-KW"/>
</dbReference>
<dbReference type="GO" id="GO:0046872">
    <property type="term" value="F:metal ion binding"/>
    <property type="evidence" value="ECO:0007669"/>
    <property type="project" value="UniProtKB-KW"/>
</dbReference>
<dbReference type="GO" id="GO:0004525">
    <property type="term" value="F:ribonuclease III activity"/>
    <property type="evidence" value="ECO:0000318"/>
    <property type="project" value="GO_Central"/>
</dbReference>
<dbReference type="GO" id="GO:0003723">
    <property type="term" value="F:RNA binding"/>
    <property type="evidence" value="ECO:0000318"/>
    <property type="project" value="GO_Central"/>
</dbReference>
<dbReference type="GO" id="GO:0030422">
    <property type="term" value="P:siRNA processing"/>
    <property type="evidence" value="ECO:0000318"/>
    <property type="project" value="GO_Central"/>
</dbReference>
<dbReference type="CDD" id="cd18034">
    <property type="entry name" value="DEXHc_dicer"/>
    <property type="match status" value="1"/>
</dbReference>
<dbReference type="CDD" id="cd02844">
    <property type="entry name" value="PAZ_CAF_like"/>
    <property type="match status" value="1"/>
</dbReference>
<dbReference type="CDD" id="cd00593">
    <property type="entry name" value="RIBOc"/>
    <property type="match status" value="2"/>
</dbReference>
<dbReference type="FunFam" id="2.170.260.10:FF:000007">
    <property type="entry name" value="Dicer-like 105"/>
    <property type="match status" value="1"/>
</dbReference>
<dbReference type="FunFam" id="1.10.1520.10:FF:000013">
    <property type="entry name" value="Endoribonuclease Dicer homolog 2"/>
    <property type="match status" value="1"/>
</dbReference>
<dbReference type="FunFam" id="1.10.1520.10:FF:000004">
    <property type="entry name" value="Endoribonuclease dicer-like 1"/>
    <property type="match status" value="1"/>
</dbReference>
<dbReference type="FunFam" id="3.40.50.300:FF:000420">
    <property type="entry name" value="Endoribonuclease dicer-like 1"/>
    <property type="match status" value="1"/>
</dbReference>
<dbReference type="FunFam" id="3.40.50.300:FF:000705">
    <property type="entry name" value="Endoribonuclease dicer-like protein"/>
    <property type="match status" value="1"/>
</dbReference>
<dbReference type="Gene3D" id="3.30.160.380">
    <property type="entry name" value="Dicer dimerisation domain"/>
    <property type="match status" value="1"/>
</dbReference>
<dbReference type="Gene3D" id="3.40.50.300">
    <property type="entry name" value="P-loop containing nucleotide triphosphate hydrolases"/>
    <property type="match status" value="2"/>
</dbReference>
<dbReference type="Gene3D" id="2.170.260.10">
    <property type="entry name" value="paz domain"/>
    <property type="match status" value="1"/>
</dbReference>
<dbReference type="Gene3D" id="1.10.1520.10">
    <property type="entry name" value="Ribonuclease III domain"/>
    <property type="match status" value="2"/>
</dbReference>
<dbReference type="InterPro" id="IPR011545">
    <property type="entry name" value="DEAD/DEAH_box_helicase_dom"/>
</dbReference>
<dbReference type="InterPro" id="IPR038248">
    <property type="entry name" value="Dicer_dimer_sf"/>
</dbReference>
<dbReference type="InterPro" id="IPR005034">
    <property type="entry name" value="Dicer_dimerisation_dom"/>
</dbReference>
<dbReference type="InterPro" id="IPR014720">
    <property type="entry name" value="dsRBD_dom"/>
</dbReference>
<dbReference type="InterPro" id="IPR014001">
    <property type="entry name" value="Helicase_ATP-bd"/>
</dbReference>
<dbReference type="InterPro" id="IPR001650">
    <property type="entry name" value="Helicase_C-like"/>
</dbReference>
<dbReference type="InterPro" id="IPR027417">
    <property type="entry name" value="P-loop_NTPase"/>
</dbReference>
<dbReference type="InterPro" id="IPR003100">
    <property type="entry name" value="PAZ_dom"/>
</dbReference>
<dbReference type="InterPro" id="IPR036085">
    <property type="entry name" value="PAZ_dom_sf"/>
</dbReference>
<dbReference type="InterPro" id="IPR000999">
    <property type="entry name" value="RNase_III_dom"/>
</dbReference>
<dbReference type="InterPro" id="IPR036389">
    <property type="entry name" value="RNase_III_sf"/>
</dbReference>
<dbReference type="PANTHER" id="PTHR14950">
    <property type="entry name" value="DICER-RELATED"/>
    <property type="match status" value="1"/>
</dbReference>
<dbReference type="PANTHER" id="PTHR14950:SF70">
    <property type="entry name" value="ENDORIBONUCLEASE DICER HOMOLOG 2"/>
    <property type="match status" value="1"/>
</dbReference>
<dbReference type="Pfam" id="PF00270">
    <property type="entry name" value="DEAD"/>
    <property type="match status" value="1"/>
</dbReference>
<dbReference type="Pfam" id="PF03368">
    <property type="entry name" value="Dicer_dimer"/>
    <property type="match status" value="1"/>
</dbReference>
<dbReference type="Pfam" id="PF00035">
    <property type="entry name" value="dsrm"/>
    <property type="match status" value="1"/>
</dbReference>
<dbReference type="Pfam" id="PF00271">
    <property type="entry name" value="Helicase_C"/>
    <property type="match status" value="1"/>
</dbReference>
<dbReference type="Pfam" id="PF02170">
    <property type="entry name" value="PAZ"/>
    <property type="match status" value="1"/>
</dbReference>
<dbReference type="Pfam" id="PF00636">
    <property type="entry name" value="Ribonuclease_3"/>
    <property type="match status" value="2"/>
</dbReference>
<dbReference type="SMART" id="SM00487">
    <property type="entry name" value="DEXDc"/>
    <property type="match status" value="1"/>
</dbReference>
<dbReference type="SMART" id="SM00358">
    <property type="entry name" value="DSRM"/>
    <property type="match status" value="1"/>
</dbReference>
<dbReference type="SMART" id="SM00490">
    <property type="entry name" value="HELICc"/>
    <property type="match status" value="1"/>
</dbReference>
<dbReference type="SMART" id="SM00949">
    <property type="entry name" value="PAZ"/>
    <property type="match status" value="1"/>
</dbReference>
<dbReference type="SMART" id="SM00535">
    <property type="entry name" value="RIBOc"/>
    <property type="match status" value="2"/>
</dbReference>
<dbReference type="SUPFAM" id="SSF54768">
    <property type="entry name" value="dsRNA-binding domain-like"/>
    <property type="match status" value="1"/>
</dbReference>
<dbReference type="SUPFAM" id="SSF52540">
    <property type="entry name" value="P-loop containing nucleoside triphosphate hydrolases"/>
    <property type="match status" value="1"/>
</dbReference>
<dbReference type="SUPFAM" id="SSF101690">
    <property type="entry name" value="PAZ domain"/>
    <property type="match status" value="1"/>
</dbReference>
<dbReference type="SUPFAM" id="SSF69065">
    <property type="entry name" value="RNase III domain-like"/>
    <property type="match status" value="2"/>
</dbReference>
<dbReference type="PROSITE" id="PS51327">
    <property type="entry name" value="DICER_DSRBF"/>
    <property type="match status" value="1"/>
</dbReference>
<dbReference type="PROSITE" id="PS50137">
    <property type="entry name" value="DS_RBD"/>
    <property type="match status" value="1"/>
</dbReference>
<dbReference type="PROSITE" id="PS51192">
    <property type="entry name" value="HELICASE_ATP_BIND_1"/>
    <property type="match status" value="1"/>
</dbReference>
<dbReference type="PROSITE" id="PS51194">
    <property type="entry name" value="HELICASE_CTER"/>
    <property type="match status" value="1"/>
</dbReference>
<dbReference type="PROSITE" id="PS50821">
    <property type="entry name" value="PAZ"/>
    <property type="match status" value="1"/>
</dbReference>
<dbReference type="PROSITE" id="PS00517">
    <property type="entry name" value="RNASE_3_1"/>
    <property type="match status" value="1"/>
</dbReference>
<dbReference type="PROSITE" id="PS50142">
    <property type="entry name" value="RNASE_3_2"/>
    <property type="match status" value="2"/>
</dbReference>
<keyword id="KW-0067">ATP-binding</keyword>
<keyword id="KW-0255">Endonuclease</keyword>
<keyword id="KW-0347">Helicase</keyword>
<keyword id="KW-0378">Hydrolase</keyword>
<keyword id="KW-0460">Magnesium</keyword>
<keyword id="KW-0464">Manganese</keyword>
<keyword id="KW-0479">Metal-binding</keyword>
<keyword id="KW-0540">Nuclease</keyword>
<keyword id="KW-0547">Nucleotide-binding</keyword>
<keyword id="KW-0539">Nucleus</keyword>
<keyword id="KW-1185">Reference proteome</keyword>
<keyword id="KW-0677">Repeat</keyword>
<keyword id="KW-0694">RNA-binding</keyword>
<keyword id="KW-0943">RNA-mediated gene silencing</keyword>